<evidence type="ECO:0000255" key="1">
    <source>
        <dbReference type="HAMAP-Rule" id="MF_01855"/>
    </source>
</evidence>
<name>F16PA_ACIBS</name>
<reference key="1">
    <citation type="journal article" date="2008" name="PLoS ONE">
        <title>Comparative analysis of Acinetobacters: three genomes for three lifestyles.</title>
        <authorList>
            <person name="Vallenet D."/>
            <person name="Nordmann P."/>
            <person name="Barbe V."/>
            <person name="Poirel L."/>
            <person name="Mangenot S."/>
            <person name="Bataille E."/>
            <person name="Dossat C."/>
            <person name="Gas S."/>
            <person name="Kreimeyer A."/>
            <person name="Lenoble P."/>
            <person name="Oztas S."/>
            <person name="Poulain J."/>
            <person name="Segurens B."/>
            <person name="Robert C."/>
            <person name="Abergel C."/>
            <person name="Claverie J.-M."/>
            <person name="Raoult D."/>
            <person name="Medigue C."/>
            <person name="Weissenbach J."/>
            <person name="Cruveiller S."/>
        </authorList>
    </citation>
    <scope>NUCLEOTIDE SEQUENCE [LARGE SCALE GENOMIC DNA]</scope>
    <source>
        <strain>SDF</strain>
    </source>
</reference>
<dbReference type="EC" id="3.1.3.11" evidence="1"/>
<dbReference type="EMBL" id="CU468230">
    <property type="protein sequence ID" value="CAP00267.1"/>
    <property type="molecule type" value="Genomic_DNA"/>
</dbReference>
<dbReference type="SMR" id="B0VT80"/>
<dbReference type="KEGG" id="abm:ABSDF0905"/>
<dbReference type="HOGENOM" id="CLU_039977_0_0_6"/>
<dbReference type="UniPathway" id="UPA00138"/>
<dbReference type="Proteomes" id="UP000001741">
    <property type="component" value="Chromosome"/>
</dbReference>
<dbReference type="GO" id="GO:0005829">
    <property type="term" value="C:cytosol"/>
    <property type="evidence" value="ECO:0007669"/>
    <property type="project" value="TreeGrafter"/>
</dbReference>
<dbReference type="GO" id="GO:0042132">
    <property type="term" value="F:fructose 1,6-bisphosphate 1-phosphatase activity"/>
    <property type="evidence" value="ECO:0007669"/>
    <property type="project" value="UniProtKB-UniRule"/>
</dbReference>
<dbReference type="GO" id="GO:0000287">
    <property type="term" value="F:magnesium ion binding"/>
    <property type="evidence" value="ECO:0007669"/>
    <property type="project" value="UniProtKB-UniRule"/>
</dbReference>
<dbReference type="GO" id="GO:0030388">
    <property type="term" value="P:fructose 1,6-bisphosphate metabolic process"/>
    <property type="evidence" value="ECO:0007669"/>
    <property type="project" value="TreeGrafter"/>
</dbReference>
<dbReference type="GO" id="GO:0006002">
    <property type="term" value="P:fructose 6-phosphate metabolic process"/>
    <property type="evidence" value="ECO:0007669"/>
    <property type="project" value="TreeGrafter"/>
</dbReference>
<dbReference type="GO" id="GO:0006000">
    <property type="term" value="P:fructose metabolic process"/>
    <property type="evidence" value="ECO:0007669"/>
    <property type="project" value="TreeGrafter"/>
</dbReference>
<dbReference type="GO" id="GO:0006094">
    <property type="term" value="P:gluconeogenesis"/>
    <property type="evidence" value="ECO:0007669"/>
    <property type="project" value="UniProtKB-UniRule"/>
</dbReference>
<dbReference type="GO" id="GO:0005986">
    <property type="term" value="P:sucrose biosynthetic process"/>
    <property type="evidence" value="ECO:0007669"/>
    <property type="project" value="TreeGrafter"/>
</dbReference>
<dbReference type="CDD" id="cd00354">
    <property type="entry name" value="FBPase"/>
    <property type="match status" value="1"/>
</dbReference>
<dbReference type="FunFam" id="3.30.540.10:FF:000002">
    <property type="entry name" value="Fructose-1,6-bisphosphatase class 1"/>
    <property type="match status" value="1"/>
</dbReference>
<dbReference type="FunFam" id="3.40.190.80:FF:000011">
    <property type="entry name" value="Fructose-1,6-bisphosphatase class 1"/>
    <property type="match status" value="1"/>
</dbReference>
<dbReference type="Gene3D" id="3.40.190.80">
    <property type="match status" value="1"/>
</dbReference>
<dbReference type="Gene3D" id="3.30.540.10">
    <property type="entry name" value="Fructose-1,6-Bisphosphatase, subunit A, domain 1"/>
    <property type="match status" value="1"/>
</dbReference>
<dbReference type="HAMAP" id="MF_01855">
    <property type="entry name" value="FBPase_class1"/>
    <property type="match status" value="1"/>
</dbReference>
<dbReference type="InterPro" id="IPR044015">
    <property type="entry name" value="FBPase_C_dom"/>
</dbReference>
<dbReference type="InterPro" id="IPR000146">
    <property type="entry name" value="FBPase_class-1"/>
</dbReference>
<dbReference type="InterPro" id="IPR033391">
    <property type="entry name" value="FBPase_N"/>
</dbReference>
<dbReference type="InterPro" id="IPR028343">
    <property type="entry name" value="FBPtase"/>
</dbReference>
<dbReference type="NCBIfam" id="NF006779">
    <property type="entry name" value="PRK09293.1-3"/>
    <property type="match status" value="1"/>
</dbReference>
<dbReference type="NCBIfam" id="NF006780">
    <property type="entry name" value="PRK09293.1-4"/>
    <property type="match status" value="1"/>
</dbReference>
<dbReference type="PANTHER" id="PTHR11556">
    <property type="entry name" value="FRUCTOSE-1,6-BISPHOSPHATASE-RELATED"/>
    <property type="match status" value="1"/>
</dbReference>
<dbReference type="PANTHER" id="PTHR11556:SF35">
    <property type="entry name" value="SEDOHEPTULOSE-1,7-BISPHOSPHATASE, CHLOROPLASTIC"/>
    <property type="match status" value="1"/>
</dbReference>
<dbReference type="Pfam" id="PF00316">
    <property type="entry name" value="FBPase"/>
    <property type="match status" value="1"/>
</dbReference>
<dbReference type="Pfam" id="PF18913">
    <property type="entry name" value="FBPase_C"/>
    <property type="match status" value="1"/>
</dbReference>
<dbReference type="PIRSF" id="PIRSF500210">
    <property type="entry name" value="FBPtase"/>
    <property type="match status" value="1"/>
</dbReference>
<dbReference type="PIRSF" id="PIRSF000904">
    <property type="entry name" value="FBPtase_SBPase"/>
    <property type="match status" value="1"/>
</dbReference>
<dbReference type="PRINTS" id="PR00115">
    <property type="entry name" value="F16BPHPHTASE"/>
</dbReference>
<dbReference type="SUPFAM" id="SSF56655">
    <property type="entry name" value="Carbohydrate phosphatase"/>
    <property type="match status" value="1"/>
</dbReference>
<keyword id="KW-0119">Carbohydrate metabolism</keyword>
<keyword id="KW-0963">Cytoplasm</keyword>
<keyword id="KW-0378">Hydrolase</keyword>
<keyword id="KW-0460">Magnesium</keyword>
<keyword id="KW-0479">Metal-binding</keyword>
<organism>
    <name type="scientific">Acinetobacter baumannii (strain SDF)</name>
    <dbReference type="NCBI Taxonomy" id="509170"/>
    <lineage>
        <taxon>Bacteria</taxon>
        <taxon>Pseudomonadati</taxon>
        <taxon>Pseudomonadota</taxon>
        <taxon>Gammaproteobacteria</taxon>
        <taxon>Moraxellales</taxon>
        <taxon>Moraxellaceae</taxon>
        <taxon>Acinetobacter</taxon>
        <taxon>Acinetobacter calcoaceticus/baumannii complex</taxon>
    </lineage>
</organism>
<gene>
    <name evidence="1" type="primary">fbp</name>
    <name type="ordered locus">ABSDF0905</name>
</gene>
<feature type="chain" id="PRO_0000364450" description="Fructose-1,6-bisphosphatase class 1">
    <location>
        <begin position="1"/>
        <end position="323"/>
    </location>
</feature>
<feature type="binding site" evidence="1">
    <location>
        <position position="88"/>
    </location>
    <ligand>
        <name>Mg(2+)</name>
        <dbReference type="ChEBI" id="CHEBI:18420"/>
        <label>1</label>
    </ligand>
</feature>
<feature type="binding site" evidence="1">
    <location>
        <position position="107"/>
    </location>
    <ligand>
        <name>Mg(2+)</name>
        <dbReference type="ChEBI" id="CHEBI:18420"/>
        <label>1</label>
    </ligand>
</feature>
<feature type="binding site" evidence="1">
    <location>
        <position position="107"/>
    </location>
    <ligand>
        <name>Mg(2+)</name>
        <dbReference type="ChEBI" id="CHEBI:18420"/>
        <label>2</label>
    </ligand>
</feature>
<feature type="binding site" evidence="1">
    <location>
        <position position="109"/>
    </location>
    <ligand>
        <name>Mg(2+)</name>
        <dbReference type="ChEBI" id="CHEBI:18420"/>
        <label>1</label>
    </ligand>
</feature>
<feature type="binding site" evidence="1">
    <location>
        <begin position="110"/>
        <end position="113"/>
    </location>
    <ligand>
        <name>substrate</name>
    </ligand>
</feature>
<feature type="binding site" evidence="1">
    <location>
        <position position="110"/>
    </location>
    <ligand>
        <name>Mg(2+)</name>
        <dbReference type="ChEBI" id="CHEBI:18420"/>
        <label>2</label>
    </ligand>
</feature>
<feature type="binding site" evidence="1">
    <location>
        <position position="200"/>
    </location>
    <ligand>
        <name>substrate</name>
    </ligand>
</feature>
<feature type="binding site" evidence="1">
    <location>
        <position position="272"/>
    </location>
    <ligand>
        <name>Mg(2+)</name>
        <dbReference type="ChEBI" id="CHEBI:18420"/>
        <label>2</label>
    </ligand>
</feature>
<sequence length="323" mass="35456">MSNLTLSQFLQQEKGNLTPELAQVIDTIAATCKTIDQALQKGALAGILGSAGNENVQGETQKKLDVISNDYLIDALKVHPHVGGLASEELDDFTPAQENGEYLVLFDPLDGSSNIDINMCVGTIFSILPAKNAVTQAQDFMQAGTQQVAAGYVLYGPSTMMALTVGNGVAFFTLDPETQTFLLTTENVQVSADTQEFAINASNQRHWEQPVKQYIEELLAGKTSVREKDFNMRWVACMVGDVHRILCRGGIFLYPYDLKDPKKAGRLRLMYEANPMSMLIEQAGGASTTGRVRILEIEPTELHQRVPVIIGSKNEVERVTSYH</sequence>
<proteinExistence type="inferred from homology"/>
<comment type="catalytic activity">
    <reaction evidence="1">
        <text>beta-D-fructose 1,6-bisphosphate + H2O = beta-D-fructose 6-phosphate + phosphate</text>
        <dbReference type="Rhea" id="RHEA:11064"/>
        <dbReference type="ChEBI" id="CHEBI:15377"/>
        <dbReference type="ChEBI" id="CHEBI:32966"/>
        <dbReference type="ChEBI" id="CHEBI:43474"/>
        <dbReference type="ChEBI" id="CHEBI:57634"/>
        <dbReference type="EC" id="3.1.3.11"/>
    </reaction>
</comment>
<comment type="cofactor">
    <cofactor evidence="1">
        <name>Mg(2+)</name>
        <dbReference type="ChEBI" id="CHEBI:18420"/>
    </cofactor>
    <text evidence="1">Binds 2 magnesium ions per subunit.</text>
</comment>
<comment type="pathway">
    <text evidence="1">Carbohydrate biosynthesis; gluconeogenesis.</text>
</comment>
<comment type="subunit">
    <text evidence="1">Homotetramer.</text>
</comment>
<comment type="subcellular location">
    <subcellularLocation>
        <location evidence="1">Cytoplasm</location>
    </subcellularLocation>
</comment>
<comment type="similarity">
    <text evidence="1">Belongs to the FBPase class 1 family.</text>
</comment>
<protein>
    <recommendedName>
        <fullName evidence="1">Fructose-1,6-bisphosphatase class 1</fullName>
        <shortName evidence="1">FBPase class 1</shortName>
        <ecNumber evidence="1">3.1.3.11</ecNumber>
    </recommendedName>
    <alternativeName>
        <fullName evidence="1">D-fructose-1,6-bisphosphate 1-phosphohydrolase class 1</fullName>
    </alternativeName>
</protein>
<accession>B0VT80</accession>